<dbReference type="EMBL" id="S74077">
    <property type="protein sequence ID" value="AAB32243.2"/>
    <property type="molecule type" value="Genomic_DNA"/>
</dbReference>
<dbReference type="SMR" id="Q53462"/>
<gene>
    <name type="primary">aepH</name>
</gene>
<proteinExistence type="predicted"/>
<name>AEPH_PECCC</name>
<comment type="function">
    <text>Involved in the control of extracellular enzymes production. Stimulates PEL, PEH, CEL, and PRT production.</text>
</comment>
<sequence length="47" mass="5482">MGQEPKGIESRKIQDGHVRKKVGRQQGLWVRTTKKEKFSRMSRDANV</sequence>
<accession>Q53462</accession>
<evidence type="ECO:0000256" key="1">
    <source>
        <dbReference type="SAM" id="MobiDB-lite"/>
    </source>
</evidence>
<feature type="chain" id="PRO_0000064467" description="Exoenzymes regulatory protein AepH">
    <location>
        <begin position="1"/>
        <end position="47"/>
    </location>
</feature>
<feature type="region of interest" description="Disordered" evidence="1">
    <location>
        <begin position="1"/>
        <end position="47"/>
    </location>
</feature>
<feature type="compositionally biased region" description="Basic and acidic residues" evidence="1">
    <location>
        <begin position="1"/>
        <end position="17"/>
    </location>
</feature>
<feature type="compositionally biased region" description="Basic and acidic residues" evidence="1">
    <location>
        <begin position="33"/>
        <end position="47"/>
    </location>
</feature>
<protein>
    <recommendedName>
        <fullName>Exoenzymes regulatory protein AepH</fullName>
    </recommendedName>
</protein>
<organism>
    <name type="scientific">Pectobacterium carotovorum subsp. carotovorum</name>
    <name type="common">Erwinia carotovora subsp. carotovora</name>
    <dbReference type="NCBI Taxonomy" id="555"/>
    <lineage>
        <taxon>Bacteria</taxon>
        <taxon>Pseudomonadati</taxon>
        <taxon>Pseudomonadota</taxon>
        <taxon>Gammaproteobacteria</taxon>
        <taxon>Enterobacterales</taxon>
        <taxon>Pectobacteriaceae</taxon>
        <taxon>Pectobacterium</taxon>
    </lineage>
</organism>
<reference key="1">
    <citation type="journal article" date="1994" name="Appl. Environ. Microbiol.">
        <title>Regulation of the production of extracellular pectinase, cellulase, and protease in the soft rot bacterium Erwinia carotovora subsp. carotovora: evidence that aepH of E. carotovora subsp. carotovora 71 activates gene expression in E. carotovora subsp. carotovora, E. carotovora subsp. atroseptica, and Escherichia coli.</title>
        <authorList>
            <person name="Murata H."/>
            <person name="Chatterjee A."/>
            <person name="Liu Y."/>
            <person name="Chatterjee A.K."/>
        </authorList>
    </citation>
    <scope>NUCLEOTIDE SEQUENCE [GENOMIC DNA]</scope>
    <source>
        <strain>71</strain>
    </source>
</reference>